<evidence type="ECO:0000255" key="1">
    <source>
        <dbReference type="HAMAP-Rule" id="MF_00126"/>
    </source>
</evidence>
<gene>
    <name evidence="1" type="primary">glnS</name>
    <name type="ordered locus">SDY_0614</name>
</gene>
<sequence length="554" mass="63520">MSEAEARPTNFIRQIIDEDLASGKHTTVHTRFPPEPNGYLHIGHAKSICLNFGIAQDYKGQCNLRFDDTNPVKEDIEYVDSIKNDVEWLGFHWSGNVRYSSDYFDQLHAYAIELINKGLAYVDELTPEQIREYRGTLTKPGKNSPYRDRSVEENLPLFEKMRTGGFEEGKACLRAKIDMASPFIVMRDPVLYRIKFAEHHQTGNKWCIYPMYDFTHCISDALEGITHSLCTLEFQDNRRLYDWVLDNITIPVHPRQYEFSRLNLEYTVMSKRKLNLLVTDKHVEGWDDPRMPTISGLRRRGYTAASIREFCKRIGVTKQDNTIEMASLESCIREDLNENAPRAMAVIDPVKLVIENYQGEGEMVTMPNHPNKPEMGSRQVPFSGEIWIDRADFREEANKQYKRLVLGKEVRLRNAYVIKAERVEKDAEGNITTIFCTYDADTLSKDPADGRKVKGVIHWVSAAHALPVEIRLYDRLFSVPNPGAADDFLSVINPESLVIKQGFAEPSLKDAVAGKAFQFEREGYFCLDSRHSTAEKPVFNRTVGLRDTWAKVGE</sequence>
<organism>
    <name type="scientific">Shigella dysenteriae serotype 1 (strain Sd197)</name>
    <dbReference type="NCBI Taxonomy" id="300267"/>
    <lineage>
        <taxon>Bacteria</taxon>
        <taxon>Pseudomonadati</taxon>
        <taxon>Pseudomonadota</taxon>
        <taxon>Gammaproteobacteria</taxon>
        <taxon>Enterobacterales</taxon>
        <taxon>Enterobacteriaceae</taxon>
        <taxon>Shigella</taxon>
    </lineage>
</organism>
<comment type="catalytic activity">
    <reaction evidence="1">
        <text>tRNA(Gln) + L-glutamine + ATP = L-glutaminyl-tRNA(Gln) + AMP + diphosphate</text>
        <dbReference type="Rhea" id="RHEA:20121"/>
        <dbReference type="Rhea" id="RHEA-COMP:9662"/>
        <dbReference type="Rhea" id="RHEA-COMP:9681"/>
        <dbReference type="ChEBI" id="CHEBI:30616"/>
        <dbReference type="ChEBI" id="CHEBI:33019"/>
        <dbReference type="ChEBI" id="CHEBI:58359"/>
        <dbReference type="ChEBI" id="CHEBI:78442"/>
        <dbReference type="ChEBI" id="CHEBI:78521"/>
        <dbReference type="ChEBI" id="CHEBI:456215"/>
        <dbReference type="EC" id="6.1.1.18"/>
    </reaction>
</comment>
<comment type="subunit">
    <text evidence="1">Monomer.</text>
</comment>
<comment type="subcellular location">
    <subcellularLocation>
        <location evidence="1">Cytoplasm</location>
    </subcellularLocation>
</comment>
<comment type="similarity">
    <text evidence="1">Belongs to the class-I aminoacyl-tRNA synthetase family.</text>
</comment>
<keyword id="KW-0030">Aminoacyl-tRNA synthetase</keyword>
<keyword id="KW-0067">ATP-binding</keyword>
<keyword id="KW-0963">Cytoplasm</keyword>
<keyword id="KW-0436">Ligase</keyword>
<keyword id="KW-0547">Nucleotide-binding</keyword>
<keyword id="KW-0648">Protein biosynthesis</keyword>
<keyword id="KW-1185">Reference proteome</keyword>
<dbReference type="EC" id="6.1.1.18" evidence="1"/>
<dbReference type="EMBL" id="CP000034">
    <property type="protein sequence ID" value="ABB60807.1"/>
    <property type="molecule type" value="Genomic_DNA"/>
</dbReference>
<dbReference type="RefSeq" id="WP_001287129.1">
    <property type="nucleotide sequence ID" value="NC_007606.1"/>
</dbReference>
<dbReference type="RefSeq" id="YP_402296.1">
    <property type="nucleotide sequence ID" value="NC_007606.1"/>
</dbReference>
<dbReference type="SMR" id="Q32IQ0"/>
<dbReference type="STRING" id="300267.SDY_0614"/>
<dbReference type="EnsemblBacteria" id="ABB60807">
    <property type="protein sequence ID" value="ABB60807"/>
    <property type="gene ID" value="SDY_0614"/>
</dbReference>
<dbReference type="KEGG" id="sdy:SDY_0614"/>
<dbReference type="PATRIC" id="fig|300267.13.peg.711"/>
<dbReference type="HOGENOM" id="CLU_001882_2_3_6"/>
<dbReference type="Proteomes" id="UP000002716">
    <property type="component" value="Chromosome"/>
</dbReference>
<dbReference type="GO" id="GO:0005829">
    <property type="term" value="C:cytosol"/>
    <property type="evidence" value="ECO:0007669"/>
    <property type="project" value="TreeGrafter"/>
</dbReference>
<dbReference type="GO" id="GO:0005524">
    <property type="term" value="F:ATP binding"/>
    <property type="evidence" value="ECO:0007669"/>
    <property type="project" value="UniProtKB-UniRule"/>
</dbReference>
<dbReference type="GO" id="GO:0004819">
    <property type="term" value="F:glutamine-tRNA ligase activity"/>
    <property type="evidence" value="ECO:0007669"/>
    <property type="project" value="UniProtKB-UniRule"/>
</dbReference>
<dbReference type="GO" id="GO:0006425">
    <property type="term" value="P:glutaminyl-tRNA aminoacylation"/>
    <property type="evidence" value="ECO:0007669"/>
    <property type="project" value="InterPro"/>
</dbReference>
<dbReference type="GO" id="GO:0006424">
    <property type="term" value="P:glutamyl-tRNA aminoacylation"/>
    <property type="evidence" value="ECO:0007669"/>
    <property type="project" value="UniProtKB-UniRule"/>
</dbReference>
<dbReference type="CDD" id="cd00807">
    <property type="entry name" value="GlnRS_core"/>
    <property type="match status" value="1"/>
</dbReference>
<dbReference type="FunFam" id="1.10.1160.10:FF:000001">
    <property type="entry name" value="Glutamine--tRNA ligase"/>
    <property type="match status" value="1"/>
</dbReference>
<dbReference type="FunFam" id="2.40.240.10:FF:000001">
    <property type="entry name" value="Glutamine--tRNA ligase"/>
    <property type="match status" value="1"/>
</dbReference>
<dbReference type="FunFam" id="2.40.240.10:FF:000003">
    <property type="entry name" value="Glutamine--tRNA ligase"/>
    <property type="match status" value="1"/>
</dbReference>
<dbReference type="FunFam" id="3.90.800.10:FF:000001">
    <property type="entry name" value="Glutamine--tRNA ligase"/>
    <property type="match status" value="1"/>
</dbReference>
<dbReference type="FunFam" id="3.40.50.620:FF:000037">
    <property type="entry name" value="Glutamine--tRNA ligase cytoplasmic"/>
    <property type="match status" value="1"/>
</dbReference>
<dbReference type="Gene3D" id="1.10.1160.10">
    <property type="entry name" value="Glutamyl-trna Synthetase, Domain 2"/>
    <property type="match status" value="1"/>
</dbReference>
<dbReference type="Gene3D" id="3.90.800.10">
    <property type="entry name" value="Glutamyl-tRNA Synthetase, Domain 3"/>
    <property type="match status" value="1"/>
</dbReference>
<dbReference type="Gene3D" id="3.40.50.620">
    <property type="entry name" value="HUPs"/>
    <property type="match status" value="1"/>
</dbReference>
<dbReference type="Gene3D" id="2.40.240.10">
    <property type="entry name" value="Ribosomal Protein L25, Chain P"/>
    <property type="match status" value="2"/>
</dbReference>
<dbReference type="HAMAP" id="MF_00126">
    <property type="entry name" value="Gln_tRNA_synth"/>
    <property type="match status" value="1"/>
</dbReference>
<dbReference type="InterPro" id="IPR001412">
    <property type="entry name" value="aa-tRNA-synth_I_CS"/>
</dbReference>
<dbReference type="InterPro" id="IPR004514">
    <property type="entry name" value="Gln-tRNA-synth"/>
</dbReference>
<dbReference type="InterPro" id="IPR050132">
    <property type="entry name" value="Gln/Glu-tRNA_Ligase"/>
</dbReference>
<dbReference type="InterPro" id="IPR022861">
    <property type="entry name" value="Gln_tRNA_ligase_bac"/>
</dbReference>
<dbReference type="InterPro" id="IPR000924">
    <property type="entry name" value="Glu/Gln-tRNA-synth"/>
</dbReference>
<dbReference type="InterPro" id="IPR020058">
    <property type="entry name" value="Glu/Gln-tRNA-synth_Ib_cat-dom"/>
</dbReference>
<dbReference type="InterPro" id="IPR020059">
    <property type="entry name" value="Glu/Gln-tRNA-synth_Ib_codon-bd"/>
</dbReference>
<dbReference type="InterPro" id="IPR020061">
    <property type="entry name" value="Glu_tRNA_lig_a-bdl"/>
</dbReference>
<dbReference type="InterPro" id="IPR020056">
    <property type="entry name" value="Rbsml_bL25/Gln-tRNA_synth_N"/>
</dbReference>
<dbReference type="InterPro" id="IPR011035">
    <property type="entry name" value="Ribosomal_bL25/Gln-tRNA_synth"/>
</dbReference>
<dbReference type="InterPro" id="IPR014729">
    <property type="entry name" value="Rossmann-like_a/b/a_fold"/>
</dbReference>
<dbReference type="InterPro" id="IPR049437">
    <property type="entry name" value="tRNA-synt_1c_C2"/>
</dbReference>
<dbReference type="NCBIfam" id="TIGR00440">
    <property type="entry name" value="glnS"/>
    <property type="match status" value="1"/>
</dbReference>
<dbReference type="NCBIfam" id="NF011291">
    <property type="entry name" value="PRK14703.1"/>
    <property type="match status" value="1"/>
</dbReference>
<dbReference type="PANTHER" id="PTHR43097:SF5">
    <property type="entry name" value="GLUTAMATE--TRNA LIGASE"/>
    <property type="match status" value="1"/>
</dbReference>
<dbReference type="PANTHER" id="PTHR43097">
    <property type="entry name" value="GLUTAMINE-TRNA LIGASE"/>
    <property type="match status" value="1"/>
</dbReference>
<dbReference type="Pfam" id="PF00749">
    <property type="entry name" value="tRNA-synt_1c"/>
    <property type="match status" value="1"/>
</dbReference>
<dbReference type="Pfam" id="PF03950">
    <property type="entry name" value="tRNA-synt_1c_C"/>
    <property type="match status" value="1"/>
</dbReference>
<dbReference type="Pfam" id="PF20974">
    <property type="entry name" value="tRNA-synt_1c_C2"/>
    <property type="match status" value="1"/>
</dbReference>
<dbReference type="PRINTS" id="PR00987">
    <property type="entry name" value="TRNASYNTHGLU"/>
</dbReference>
<dbReference type="SUPFAM" id="SSF52374">
    <property type="entry name" value="Nucleotidylyl transferase"/>
    <property type="match status" value="1"/>
</dbReference>
<dbReference type="SUPFAM" id="SSF50715">
    <property type="entry name" value="Ribosomal protein L25-like"/>
    <property type="match status" value="1"/>
</dbReference>
<dbReference type="PROSITE" id="PS00178">
    <property type="entry name" value="AA_TRNA_LIGASE_I"/>
    <property type="match status" value="1"/>
</dbReference>
<accession>Q32IQ0</accession>
<proteinExistence type="inferred from homology"/>
<reference key="1">
    <citation type="journal article" date="2005" name="Nucleic Acids Res.">
        <title>Genome dynamics and diversity of Shigella species, the etiologic agents of bacillary dysentery.</title>
        <authorList>
            <person name="Yang F."/>
            <person name="Yang J."/>
            <person name="Zhang X."/>
            <person name="Chen L."/>
            <person name="Jiang Y."/>
            <person name="Yan Y."/>
            <person name="Tang X."/>
            <person name="Wang J."/>
            <person name="Xiong Z."/>
            <person name="Dong J."/>
            <person name="Xue Y."/>
            <person name="Zhu Y."/>
            <person name="Xu X."/>
            <person name="Sun L."/>
            <person name="Chen S."/>
            <person name="Nie H."/>
            <person name="Peng J."/>
            <person name="Xu J."/>
            <person name="Wang Y."/>
            <person name="Yuan Z."/>
            <person name="Wen Y."/>
            <person name="Yao Z."/>
            <person name="Shen Y."/>
            <person name="Qiang B."/>
            <person name="Hou Y."/>
            <person name="Yu J."/>
            <person name="Jin Q."/>
        </authorList>
    </citation>
    <scope>NUCLEOTIDE SEQUENCE [LARGE SCALE GENOMIC DNA]</scope>
    <source>
        <strain>Sd197</strain>
    </source>
</reference>
<feature type="chain" id="PRO_0000242876" description="Glutamine--tRNA ligase">
    <location>
        <begin position="1"/>
        <end position="554"/>
    </location>
</feature>
<feature type="region of interest" description="Interaction with tRNA" evidence="1">
    <location>
        <begin position="317"/>
        <end position="324"/>
    </location>
</feature>
<feature type="short sequence motif" description="'HIGH' region" evidence="1">
    <location>
        <begin position="34"/>
        <end position="44"/>
    </location>
</feature>
<feature type="short sequence motif" description="'KMSKS' region" evidence="1">
    <location>
        <begin position="268"/>
        <end position="272"/>
    </location>
</feature>
<feature type="binding site" evidence="1">
    <location>
        <begin position="35"/>
        <end position="37"/>
    </location>
    <ligand>
        <name>ATP</name>
        <dbReference type="ChEBI" id="CHEBI:30616"/>
    </ligand>
</feature>
<feature type="binding site" evidence="1">
    <location>
        <begin position="41"/>
        <end position="47"/>
    </location>
    <ligand>
        <name>ATP</name>
        <dbReference type="ChEBI" id="CHEBI:30616"/>
    </ligand>
</feature>
<feature type="binding site" evidence="1">
    <location>
        <position position="67"/>
    </location>
    <ligand>
        <name>L-glutamine</name>
        <dbReference type="ChEBI" id="CHEBI:58359"/>
    </ligand>
</feature>
<feature type="binding site" evidence="1">
    <location>
        <position position="212"/>
    </location>
    <ligand>
        <name>L-glutamine</name>
        <dbReference type="ChEBI" id="CHEBI:58359"/>
    </ligand>
</feature>
<feature type="binding site" evidence="1">
    <location>
        <position position="231"/>
    </location>
    <ligand>
        <name>ATP</name>
        <dbReference type="ChEBI" id="CHEBI:30616"/>
    </ligand>
</feature>
<feature type="binding site" evidence="1">
    <location>
        <begin position="261"/>
        <end position="262"/>
    </location>
    <ligand>
        <name>ATP</name>
        <dbReference type="ChEBI" id="CHEBI:30616"/>
    </ligand>
</feature>
<feature type="binding site" evidence="1">
    <location>
        <begin position="269"/>
        <end position="271"/>
    </location>
    <ligand>
        <name>ATP</name>
        <dbReference type="ChEBI" id="CHEBI:30616"/>
    </ligand>
</feature>
<protein>
    <recommendedName>
        <fullName evidence="1">Glutamine--tRNA ligase</fullName>
        <ecNumber evidence="1">6.1.1.18</ecNumber>
    </recommendedName>
    <alternativeName>
        <fullName evidence="1">Glutaminyl-tRNA synthetase</fullName>
        <shortName evidence="1">GlnRS</shortName>
    </alternativeName>
</protein>
<name>SYQ_SHIDS</name>